<reference key="1">
    <citation type="journal article" date="2002" name="Nucleic Acids Res.">
        <title>Genome sequence of Shigella flexneri 2a: insights into pathogenicity through comparison with genomes of Escherichia coli K12 and O157.</title>
        <authorList>
            <person name="Jin Q."/>
            <person name="Yuan Z."/>
            <person name="Xu J."/>
            <person name="Wang Y."/>
            <person name="Shen Y."/>
            <person name="Lu W."/>
            <person name="Wang J."/>
            <person name="Liu H."/>
            <person name="Yang J."/>
            <person name="Yang F."/>
            <person name="Zhang X."/>
            <person name="Zhang J."/>
            <person name="Yang G."/>
            <person name="Wu H."/>
            <person name="Qu D."/>
            <person name="Dong J."/>
            <person name="Sun L."/>
            <person name="Xue Y."/>
            <person name="Zhao A."/>
            <person name="Gao Y."/>
            <person name="Zhu J."/>
            <person name="Kan B."/>
            <person name="Ding K."/>
            <person name="Chen S."/>
            <person name="Cheng H."/>
            <person name="Yao Z."/>
            <person name="He B."/>
            <person name="Chen R."/>
            <person name="Ma D."/>
            <person name="Qiang B."/>
            <person name="Wen Y."/>
            <person name="Hou Y."/>
            <person name="Yu J."/>
        </authorList>
    </citation>
    <scope>NUCLEOTIDE SEQUENCE [LARGE SCALE GENOMIC DNA]</scope>
    <source>
        <strain>301 / Serotype 2a</strain>
    </source>
</reference>
<reference key="2">
    <citation type="journal article" date="2003" name="Infect. Immun.">
        <title>Complete genome sequence and comparative genomics of Shigella flexneri serotype 2a strain 2457T.</title>
        <authorList>
            <person name="Wei J."/>
            <person name="Goldberg M.B."/>
            <person name="Burland V."/>
            <person name="Venkatesan M.M."/>
            <person name="Deng W."/>
            <person name="Fournier G."/>
            <person name="Mayhew G.F."/>
            <person name="Plunkett G. III"/>
            <person name="Rose D.J."/>
            <person name="Darling A."/>
            <person name="Mau B."/>
            <person name="Perna N.T."/>
            <person name="Payne S.M."/>
            <person name="Runyen-Janecky L.J."/>
            <person name="Zhou S."/>
            <person name="Schwartz D.C."/>
            <person name="Blattner F.R."/>
        </authorList>
    </citation>
    <scope>NUCLEOTIDE SEQUENCE [LARGE SCALE GENOMIC DNA]</scope>
    <source>
        <strain>ATCC 700930 / 2457T / Serotype 2a</strain>
    </source>
</reference>
<accession>P0A9I7</accession>
<accession>P33938</accession>
<sequence length="87" mass="9469">MHTNWQVCSLVVQAKSERISDISTQLNAFPGCEVAVSDAPSGQLIVVVEAEDSETLIQTIESVRNVEGVLAVSLVYHQQEEQGEETP</sequence>
<proteinExistence type="inferred from homology"/>
<keyword id="KW-0143">Chaperone</keyword>
<keyword id="KW-0963">Cytoplasm</keyword>
<keyword id="KW-1185">Reference proteome</keyword>
<evidence type="ECO:0000255" key="1">
    <source>
        <dbReference type="HAMAP-Rule" id="MF_02200"/>
    </source>
</evidence>
<evidence type="ECO:0000305" key="2"/>
<organism>
    <name type="scientific">Shigella flexneri</name>
    <dbReference type="NCBI Taxonomy" id="623"/>
    <lineage>
        <taxon>Bacteria</taxon>
        <taxon>Pseudomonadati</taxon>
        <taxon>Pseudomonadota</taxon>
        <taxon>Gammaproteobacteria</taxon>
        <taxon>Enterobacterales</taxon>
        <taxon>Enterobacteriaceae</taxon>
        <taxon>Shigella</taxon>
    </lineage>
</organism>
<protein>
    <recommendedName>
        <fullName evidence="1">Chaperone NapD</fullName>
    </recommendedName>
    <alternativeName>
        <fullName evidence="1">NapA signal peptide-binding chaperone NapD</fullName>
    </alternativeName>
</protein>
<dbReference type="EMBL" id="AE005674">
    <property type="protein sequence ID" value="AAN43810.1"/>
    <property type="molecule type" value="Genomic_DNA"/>
</dbReference>
<dbReference type="EMBL" id="AE014073">
    <property type="protein sequence ID" value="AAP17627.1"/>
    <property type="molecule type" value="Genomic_DNA"/>
</dbReference>
<dbReference type="RefSeq" id="NP_708103.1">
    <property type="nucleotide sequence ID" value="NC_004337.2"/>
</dbReference>
<dbReference type="RefSeq" id="WP_000557378.1">
    <property type="nucleotide sequence ID" value="NZ_WPGW01000022.1"/>
</dbReference>
<dbReference type="BMRB" id="P0A9I7"/>
<dbReference type="SMR" id="P0A9I7"/>
<dbReference type="STRING" id="198214.SF2291"/>
<dbReference type="PaxDb" id="198214-SF2291"/>
<dbReference type="GeneID" id="1027277"/>
<dbReference type="GeneID" id="93774971"/>
<dbReference type="KEGG" id="sfl:SF2291"/>
<dbReference type="KEGG" id="sfx:S2421"/>
<dbReference type="PATRIC" id="fig|198214.7.peg.2742"/>
<dbReference type="HOGENOM" id="CLU_155794_1_0_6"/>
<dbReference type="Proteomes" id="UP000001006">
    <property type="component" value="Chromosome"/>
</dbReference>
<dbReference type="Proteomes" id="UP000002673">
    <property type="component" value="Chromosome"/>
</dbReference>
<dbReference type="GO" id="GO:0005737">
    <property type="term" value="C:cytoplasm"/>
    <property type="evidence" value="ECO:0007669"/>
    <property type="project" value="UniProtKB-SubCell"/>
</dbReference>
<dbReference type="GO" id="GO:0005048">
    <property type="term" value="F:signal sequence binding"/>
    <property type="evidence" value="ECO:0007669"/>
    <property type="project" value="UniProtKB-UniRule"/>
</dbReference>
<dbReference type="GO" id="GO:0051224">
    <property type="term" value="P:negative regulation of protein transport"/>
    <property type="evidence" value="ECO:0007669"/>
    <property type="project" value="UniProtKB-UniRule"/>
</dbReference>
<dbReference type="FunFam" id="3.30.70.920:FF:000004">
    <property type="entry name" value="Chaperone NapD"/>
    <property type="match status" value="1"/>
</dbReference>
<dbReference type="Gene3D" id="3.30.70.920">
    <property type="match status" value="1"/>
</dbReference>
<dbReference type="HAMAP" id="MF_02200">
    <property type="entry name" value="NapD"/>
    <property type="match status" value="1"/>
</dbReference>
<dbReference type="InterPro" id="IPR005623">
    <property type="entry name" value="Chaperone_NapD_NO3_reduct"/>
</dbReference>
<dbReference type="NCBIfam" id="NF007840">
    <property type="entry name" value="PRK10553.1"/>
    <property type="match status" value="1"/>
</dbReference>
<dbReference type="PANTHER" id="PTHR38603">
    <property type="entry name" value="CHAPERONE NAPD"/>
    <property type="match status" value="1"/>
</dbReference>
<dbReference type="PANTHER" id="PTHR38603:SF1">
    <property type="entry name" value="CHAPERONE NAPD"/>
    <property type="match status" value="1"/>
</dbReference>
<dbReference type="Pfam" id="PF03927">
    <property type="entry name" value="NapD"/>
    <property type="match status" value="1"/>
</dbReference>
<gene>
    <name evidence="1" type="primary">napD</name>
    <name type="ordered locus">SF2291</name>
    <name type="ordered locus">S2421</name>
</gene>
<name>NAPD_SHIFL</name>
<feature type="chain" id="PRO_0000096716" description="Chaperone NapD">
    <location>
        <begin position="1"/>
        <end position="87"/>
    </location>
</feature>
<comment type="function">
    <text evidence="1">Chaperone for NapA, the catalytic subunit of the periplasmic nitrate reductase. It binds directly and specifically to the twin-arginine signal peptide of NapA, preventing premature interaction with the Tat translocase and premature export.</text>
</comment>
<comment type="subunit">
    <text evidence="1">Interacts with the cytoplasmic NapA precursor.</text>
</comment>
<comment type="subcellular location">
    <subcellularLocation>
        <location evidence="1 2">Cytoplasm</location>
    </subcellularLocation>
</comment>
<comment type="similarity">
    <text evidence="1">Belongs to the NapD family.</text>
</comment>